<dbReference type="EC" id="3.5.3.23" evidence="1"/>
<dbReference type="EMBL" id="AL513382">
    <property type="protein sequence ID" value="CAD02048.1"/>
    <property type="molecule type" value="Genomic_DNA"/>
</dbReference>
<dbReference type="EMBL" id="AE014613">
    <property type="protein sequence ID" value="AAO68841.1"/>
    <property type="molecule type" value="Genomic_DNA"/>
</dbReference>
<dbReference type="RefSeq" id="NP_456206.1">
    <property type="nucleotide sequence ID" value="NC_003198.1"/>
</dbReference>
<dbReference type="RefSeq" id="WP_000123947.1">
    <property type="nucleotide sequence ID" value="NZ_WSUR01000034.1"/>
</dbReference>
<dbReference type="SMR" id="Q8Z6G2"/>
<dbReference type="STRING" id="220341.gene:17585740"/>
<dbReference type="KEGG" id="stt:t1185"/>
<dbReference type="KEGG" id="sty:STY1808"/>
<dbReference type="PATRIC" id="fig|220341.7.peg.1820"/>
<dbReference type="eggNOG" id="COG3724">
    <property type="taxonomic scope" value="Bacteria"/>
</dbReference>
<dbReference type="HOGENOM" id="CLU_053835_0_0_6"/>
<dbReference type="OMA" id="RVAMNDQ"/>
<dbReference type="OrthoDB" id="248552at2"/>
<dbReference type="UniPathway" id="UPA00185">
    <property type="reaction ID" value="UER00280"/>
</dbReference>
<dbReference type="Proteomes" id="UP000000541">
    <property type="component" value="Chromosome"/>
</dbReference>
<dbReference type="Proteomes" id="UP000002670">
    <property type="component" value="Chromosome"/>
</dbReference>
<dbReference type="GO" id="GO:0009015">
    <property type="term" value="F:N-succinylarginine dihydrolase activity"/>
    <property type="evidence" value="ECO:0007669"/>
    <property type="project" value="UniProtKB-UniRule"/>
</dbReference>
<dbReference type="GO" id="GO:0019544">
    <property type="term" value="P:arginine catabolic process to glutamate"/>
    <property type="evidence" value="ECO:0007669"/>
    <property type="project" value="UniProtKB-UniRule"/>
</dbReference>
<dbReference type="GO" id="GO:0019545">
    <property type="term" value="P:arginine catabolic process to succinate"/>
    <property type="evidence" value="ECO:0007669"/>
    <property type="project" value="UniProtKB-UniRule"/>
</dbReference>
<dbReference type="FunFam" id="3.75.10.20:FF:000001">
    <property type="entry name" value="N-succinylarginine dihydrolase"/>
    <property type="match status" value="1"/>
</dbReference>
<dbReference type="Gene3D" id="3.75.10.20">
    <property type="entry name" value="Succinylarginine dihydrolase"/>
    <property type="match status" value="1"/>
</dbReference>
<dbReference type="HAMAP" id="MF_01172">
    <property type="entry name" value="AstB"/>
    <property type="match status" value="1"/>
</dbReference>
<dbReference type="InterPro" id="IPR037031">
    <property type="entry name" value="AstB_sf"/>
</dbReference>
<dbReference type="InterPro" id="IPR007079">
    <property type="entry name" value="SuccinylArg_d-Hdrlase_AstB"/>
</dbReference>
<dbReference type="NCBIfam" id="TIGR03241">
    <property type="entry name" value="arg_catab_astB"/>
    <property type="match status" value="1"/>
</dbReference>
<dbReference type="NCBIfam" id="NF009789">
    <property type="entry name" value="PRK13281.1"/>
    <property type="match status" value="1"/>
</dbReference>
<dbReference type="PANTHER" id="PTHR30420">
    <property type="entry name" value="N-SUCCINYLARGININE DIHYDROLASE"/>
    <property type="match status" value="1"/>
</dbReference>
<dbReference type="PANTHER" id="PTHR30420:SF2">
    <property type="entry name" value="N-SUCCINYLARGININE DIHYDROLASE"/>
    <property type="match status" value="1"/>
</dbReference>
<dbReference type="Pfam" id="PF04996">
    <property type="entry name" value="AstB"/>
    <property type="match status" value="1"/>
</dbReference>
<dbReference type="SUPFAM" id="SSF55909">
    <property type="entry name" value="Pentein"/>
    <property type="match status" value="1"/>
</dbReference>
<sequence>MTAHEVNFDGLVGLTHHYAGLSFGNEASTRHRFQVSNPRLAVKQGLLKMKALADAGFPQAVIPPHERPFIPALRQLGFTGSDEQILDKVARQAPRWLSSVSSASPMWVANAATVCPSADALDGKVHLTVANLNNKFHRALEAPVTEALLRAIFRDESQFSVHSALPQVALLGDEGAANHNRLGGEYGSAGVQLFVYGREEENEIRPARYPARQSREASEAVARLNQVNPQQVIFAQQNPEVIDQGVFHNDVIAVSNRQVLFCHEAAFARQKVLINQLRTRVDGFMAIEVPAGEVSVSDAVATYLFNSQLLSRDDGSMLLVLPRECQDHAGVWRYLNKLVAEDNPISAMQVFDLRESMANGGGPACLRLRVVLTEEERRAVNPAVMMNDALFTALNAWADRYYRDRLTAADLADPLLLREGREALDVLTRLLDLGSVYPFQQTGAADG</sequence>
<reference key="1">
    <citation type="journal article" date="2001" name="Nature">
        <title>Complete genome sequence of a multiple drug resistant Salmonella enterica serovar Typhi CT18.</title>
        <authorList>
            <person name="Parkhill J."/>
            <person name="Dougan G."/>
            <person name="James K.D."/>
            <person name="Thomson N.R."/>
            <person name="Pickard D."/>
            <person name="Wain J."/>
            <person name="Churcher C.M."/>
            <person name="Mungall K.L."/>
            <person name="Bentley S.D."/>
            <person name="Holden M.T.G."/>
            <person name="Sebaihia M."/>
            <person name="Baker S."/>
            <person name="Basham D."/>
            <person name="Brooks K."/>
            <person name="Chillingworth T."/>
            <person name="Connerton P."/>
            <person name="Cronin A."/>
            <person name="Davis P."/>
            <person name="Davies R.M."/>
            <person name="Dowd L."/>
            <person name="White N."/>
            <person name="Farrar J."/>
            <person name="Feltwell T."/>
            <person name="Hamlin N."/>
            <person name="Haque A."/>
            <person name="Hien T.T."/>
            <person name="Holroyd S."/>
            <person name="Jagels K."/>
            <person name="Krogh A."/>
            <person name="Larsen T.S."/>
            <person name="Leather S."/>
            <person name="Moule S."/>
            <person name="O'Gaora P."/>
            <person name="Parry C."/>
            <person name="Quail M.A."/>
            <person name="Rutherford K.M."/>
            <person name="Simmonds M."/>
            <person name="Skelton J."/>
            <person name="Stevens K."/>
            <person name="Whitehead S."/>
            <person name="Barrell B.G."/>
        </authorList>
    </citation>
    <scope>NUCLEOTIDE SEQUENCE [LARGE SCALE GENOMIC DNA]</scope>
    <source>
        <strain>CT18</strain>
    </source>
</reference>
<reference key="2">
    <citation type="journal article" date="2003" name="J. Bacteriol.">
        <title>Comparative genomics of Salmonella enterica serovar Typhi strains Ty2 and CT18.</title>
        <authorList>
            <person name="Deng W."/>
            <person name="Liou S.-R."/>
            <person name="Plunkett G. III"/>
            <person name="Mayhew G.F."/>
            <person name="Rose D.J."/>
            <person name="Burland V."/>
            <person name="Kodoyianni V."/>
            <person name="Schwartz D.C."/>
            <person name="Blattner F.R."/>
        </authorList>
    </citation>
    <scope>NUCLEOTIDE SEQUENCE [LARGE SCALE GENOMIC DNA]</scope>
    <source>
        <strain>ATCC 700931 / Ty2</strain>
    </source>
</reference>
<proteinExistence type="inferred from homology"/>
<comment type="function">
    <text evidence="1">Catalyzes the hydrolysis of N(2)-succinylarginine into N(2)-succinylornithine, ammonia and CO(2).</text>
</comment>
<comment type="catalytic activity">
    <reaction evidence="1">
        <text>N(2)-succinyl-L-arginine + 2 H2O + 2 H(+) = N(2)-succinyl-L-ornithine + 2 NH4(+) + CO2</text>
        <dbReference type="Rhea" id="RHEA:19533"/>
        <dbReference type="ChEBI" id="CHEBI:15377"/>
        <dbReference type="ChEBI" id="CHEBI:15378"/>
        <dbReference type="ChEBI" id="CHEBI:16526"/>
        <dbReference type="ChEBI" id="CHEBI:28938"/>
        <dbReference type="ChEBI" id="CHEBI:58241"/>
        <dbReference type="ChEBI" id="CHEBI:58514"/>
        <dbReference type="EC" id="3.5.3.23"/>
    </reaction>
</comment>
<comment type="pathway">
    <text evidence="1">Amino-acid degradation; L-arginine degradation via AST pathway; L-glutamate and succinate from L-arginine: step 2/5.</text>
</comment>
<comment type="subunit">
    <text evidence="1">Homodimer.</text>
</comment>
<comment type="similarity">
    <text evidence="1">Belongs to the succinylarginine dihydrolase family.</text>
</comment>
<gene>
    <name evidence="1" type="primary">astB</name>
    <name type="ordered locus">STY1808</name>
    <name type="ordered locus">t1185</name>
</gene>
<evidence type="ECO:0000255" key="1">
    <source>
        <dbReference type="HAMAP-Rule" id="MF_01172"/>
    </source>
</evidence>
<feature type="chain" id="PRO_0000262372" description="N-succinylarginine dihydrolase">
    <location>
        <begin position="1"/>
        <end position="447"/>
    </location>
</feature>
<feature type="active site" evidence="1">
    <location>
        <position position="174"/>
    </location>
</feature>
<feature type="active site" evidence="1">
    <location>
        <position position="248"/>
    </location>
</feature>
<feature type="active site" description="Nucleophile" evidence="1">
    <location>
        <position position="365"/>
    </location>
</feature>
<feature type="binding site" evidence="1">
    <location>
        <begin position="19"/>
        <end position="28"/>
    </location>
    <ligand>
        <name>substrate</name>
    </ligand>
</feature>
<feature type="binding site" evidence="1">
    <location>
        <position position="110"/>
    </location>
    <ligand>
        <name>substrate</name>
    </ligand>
</feature>
<feature type="binding site" evidence="1">
    <location>
        <begin position="137"/>
        <end position="138"/>
    </location>
    <ligand>
        <name>substrate</name>
    </ligand>
</feature>
<feature type="binding site" evidence="1">
    <location>
        <position position="212"/>
    </location>
    <ligand>
        <name>substrate</name>
    </ligand>
</feature>
<feature type="binding site" evidence="1">
    <location>
        <position position="250"/>
    </location>
    <ligand>
        <name>substrate</name>
    </ligand>
</feature>
<feature type="binding site" evidence="1">
    <location>
        <position position="359"/>
    </location>
    <ligand>
        <name>substrate</name>
    </ligand>
</feature>
<accession>Q8Z6G2</accession>
<accession>Q7CA94</accession>
<organism>
    <name type="scientific">Salmonella typhi</name>
    <dbReference type="NCBI Taxonomy" id="90370"/>
    <lineage>
        <taxon>Bacteria</taxon>
        <taxon>Pseudomonadati</taxon>
        <taxon>Pseudomonadota</taxon>
        <taxon>Gammaproteobacteria</taxon>
        <taxon>Enterobacterales</taxon>
        <taxon>Enterobacteriaceae</taxon>
        <taxon>Salmonella</taxon>
    </lineage>
</organism>
<name>ASTB_SALTI</name>
<keyword id="KW-0056">Arginine metabolism</keyword>
<keyword id="KW-0378">Hydrolase</keyword>
<protein>
    <recommendedName>
        <fullName evidence="1">N-succinylarginine dihydrolase</fullName>
        <ecNumber evidence="1">3.5.3.23</ecNumber>
    </recommendedName>
</protein>